<dbReference type="EC" id="3.6.5.-" evidence="1"/>
<dbReference type="EMBL" id="CP000425">
    <property type="protein sequence ID" value="ABJ73190.1"/>
    <property type="molecule type" value="Genomic_DNA"/>
</dbReference>
<dbReference type="RefSeq" id="WP_011676624.1">
    <property type="nucleotide sequence ID" value="NC_008527.1"/>
</dbReference>
<dbReference type="SMR" id="Q02XY2"/>
<dbReference type="KEGG" id="llc:LACR_1694"/>
<dbReference type="HOGENOM" id="CLU_011747_2_1_9"/>
<dbReference type="Proteomes" id="UP000000240">
    <property type="component" value="Chromosome"/>
</dbReference>
<dbReference type="GO" id="GO:0005737">
    <property type="term" value="C:cytoplasm"/>
    <property type="evidence" value="ECO:0007669"/>
    <property type="project" value="UniProtKB-SubCell"/>
</dbReference>
<dbReference type="GO" id="GO:0005525">
    <property type="term" value="F:GTP binding"/>
    <property type="evidence" value="ECO:0007669"/>
    <property type="project" value="UniProtKB-UniRule"/>
</dbReference>
<dbReference type="GO" id="GO:0003924">
    <property type="term" value="F:GTPase activity"/>
    <property type="evidence" value="ECO:0007669"/>
    <property type="project" value="UniProtKB-UniRule"/>
</dbReference>
<dbReference type="GO" id="GO:0000287">
    <property type="term" value="F:magnesium ion binding"/>
    <property type="evidence" value="ECO:0007669"/>
    <property type="project" value="InterPro"/>
</dbReference>
<dbReference type="GO" id="GO:0042254">
    <property type="term" value="P:ribosome biogenesis"/>
    <property type="evidence" value="ECO:0007669"/>
    <property type="project" value="UniProtKB-UniRule"/>
</dbReference>
<dbReference type="CDD" id="cd01898">
    <property type="entry name" value="Obg"/>
    <property type="match status" value="1"/>
</dbReference>
<dbReference type="FunFam" id="2.70.210.12:FF:000001">
    <property type="entry name" value="GTPase Obg"/>
    <property type="match status" value="1"/>
</dbReference>
<dbReference type="Gene3D" id="3.30.300.350">
    <property type="entry name" value="GTP-binding protein OBG, C-terminal domain"/>
    <property type="match status" value="1"/>
</dbReference>
<dbReference type="Gene3D" id="2.70.210.12">
    <property type="entry name" value="GTP1/OBG domain"/>
    <property type="match status" value="1"/>
</dbReference>
<dbReference type="Gene3D" id="3.40.50.300">
    <property type="entry name" value="P-loop containing nucleotide triphosphate hydrolases"/>
    <property type="match status" value="1"/>
</dbReference>
<dbReference type="HAMAP" id="MF_01454">
    <property type="entry name" value="GTPase_Obg"/>
    <property type="match status" value="1"/>
</dbReference>
<dbReference type="InterPro" id="IPR031167">
    <property type="entry name" value="G_OBG"/>
</dbReference>
<dbReference type="InterPro" id="IPR006073">
    <property type="entry name" value="GTP-bd"/>
</dbReference>
<dbReference type="InterPro" id="IPR014100">
    <property type="entry name" value="GTP-bd_Obg/CgtA"/>
</dbReference>
<dbReference type="InterPro" id="IPR036346">
    <property type="entry name" value="GTP-bd_prot_GTP1/OBG_C_sf"/>
</dbReference>
<dbReference type="InterPro" id="IPR006074">
    <property type="entry name" value="GTP1-OBG_CS"/>
</dbReference>
<dbReference type="InterPro" id="IPR006169">
    <property type="entry name" value="GTP1_OBG_dom"/>
</dbReference>
<dbReference type="InterPro" id="IPR036726">
    <property type="entry name" value="GTP1_OBG_dom_sf"/>
</dbReference>
<dbReference type="InterPro" id="IPR045086">
    <property type="entry name" value="OBG_GTPase"/>
</dbReference>
<dbReference type="InterPro" id="IPR015349">
    <property type="entry name" value="OCT_dom"/>
</dbReference>
<dbReference type="InterPro" id="IPR027417">
    <property type="entry name" value="P-loop_NTPase"/>
</dbReference>
<dbReference type="NCBIfam" id="TIGR02729">
    <property type="entry name" value="Obg_CgtA"/>
    <property type="match status" value="1"/>
</dbReference>
<dbReference type="NCBIfam" id="TIGR03595">
    <property type="entry name" value="Obg_CgtA_exten"/>
    <property type="match status" value="1"/>
</dbReference>
<dbReference type="NCBIfam" id="NF008954">
    <property type="entry name" value="PRK12296.1"/>
    <property type="match status" value="1"/>
</dbReference>
<dbReference type="NCBIfam" id="NF008955">
    <property type="entry name" value="PRK12297.1"/>
    <property type="match status" value="1"/>
</dbReference>
<dbReference type="NCBIfam" id="NF008956">
    <property type="entry name" value="PRK12299.1"/>
    <property type="match status" value="1"/>
</dbReference>
<dbReference type="PANTHER" id="PTHR11702">
    <property type="entry name" value="DEVELOPMENTALLY REGULATED GTP-BINDING PROTEIN-RELATED"/>
    <property type="match status" value="1"/>
</dbReference>
<dbReference type="PANTHER" id="PTHR11702:SF31">
    <property type="entry name" value="MITOCHONDRIAL RIBOSOME-ASSOCIATED GTPASE 2"/>
    <property type="match status" value="1"/>
</dbReference>
<dbReference type="Pfam" id="PF09269">
    <property type="entry name" value="DUF1967"/>
    <property type="match status" value="1"/>
</dbReference>
<dbReference type="Pfam" id="PF01018">
    <property type="entry name" value="GTP1_OBG"/>
    <property type="match status" value="1"/>
</dbReference>
<dbReference type="Pfam" id="PF01926">
    <property type="entry name" value="MMR_HSR1"/>
    <property type="match status" value="1"/>
</dbReference>
<dbReference type="PRINTS" id="PR00326">
    <property type="entry name" value="GTP1OBG"/>
</dbReference>
<dbReference type="SUPFAM" id="SSF102741">
    <property type="entry name" value="Obg GTP-binding protein C-terminal domain"/>
    <property type="match status" value="1"/>
</dbReference>
<dbReference type="SUPFAM" id="SSF82051">
    <property type="entry name" value="Obg GTP-binding protein N-terminal domain"/>
    <property type="match status" value="1"/>
</dbReference>
<dbReference type="SUPFAM" id="SSF52540">
    <property type="entry name" value="P-loop containing nucleoside triphosphate hydrolases"/>
    <property type="match status" value="1"/>
</dbReference>
<dbReference type="PROSITE" id="PS51710">
    <property type="entry name" value="G_OBG"/>
    <property type="match status" value="1"/>
</dbReference>
<dbReference type="PROSITE" id="PS00905">
    <property type="entry name" value="GTP1_OBG"/>
    <property type="match status" value="1"/>
</dbReference>
<dbReference type="PROSITE" id="PS51883">
    <property type="entry name" value="OBG"/>
    <property type="match status" value="1"/>
</dbReference>
<dbReference type="PROSITE" id="PS51881">
    <property type="entry name" value="OCT"/>
    <property type="match status" value="1"/>
</dbReference>
<sequence length="437" mass="48248">MSLFLDTARIEVKAGKGGDGAVAFRREKYVPDGGPAGGDGGKGGSVIFKVDEGMSTLMDFRYNRIFRGKPGEKGMNKGMHGRGAEDLIVHVPQGTTVKDNETGDVLVDLIEKDQEFVVAKGGRGGRGNIRFATPRNPAPEVAENGEPGEDKILLLELRVLADVGLVGFPSVGKSTLLSVVSNARPKIGAYHFTTITPNIGMVQVGYGDSFVMADMPGLIEGAHSGAGLGIQFLRHIERTRVLLHILDMSELEGRDPYEDYKTINDELESYNLRLMERPQLIVANKMDMPEAAERLAEFKEKLAADLEADQEMPEIFEVSGLIKTGLQGLLARTSELLAQTPEFLLYDEDALGDEVAYYGFEDEEKPFKVSRDDDGGWRLSGEKIEKLFIMTNFDHDESVMKFARQMRAFGVDETLRSMGAKDGDYVRIQKFEFEFVD</sequence>
<proteinExistence type="inferred from homology"/>
<gene>
    <name evidence="1" type="primary">obg</name>
    <name type="ordered locus">LACR_1694</name>
</gene>
<accession>Q02XY2</accession>
<feature type="chain" id="PRO_0000386005" description="GTPase Obg">
    <location>
        <begin position="1"/>
        <end position="437"/>
    </location>
</feature>
<feature type="domain" description="Obg" evidence="3">
    <location>
        <begin position="2"/>
        <end position="160"/>
    </location>
</feature>
<feature type="domain" description="OBG-type G" evidence="1">
    <location>
        <begin position="161"/>
        <end position="338"/>
    </location>
</feature>
<feature type="domain" description="OCT" evidence="2">
    <location>
        <begin position="359"/>
        <end position="437"/>
    </location>
</feature>
<feature type="binding site" evidence="1">
    <location>
        <begin position="167"/>
        <end position="174"/>
    </location>
    <ligand>
        <name>GTP</name>
        <dbReference type="ChEBI" id="CHEBI:37565"/>
    </ligand>
</feature>
<feature type="binding site" evidence="1">
    <location>
        <position position="174"/>
    </location>
    <ligand>
        <name>Mg(2+)</name>
        <dbReference type="ChEBI" id="CHEBI:18420"/>
    </ligand>
</feature>
<feature type="binding site" evidence="1">
    <location>
        <begin position="192"/>
        <end position="196"/>
    </location>
    <ligand>
        <name>GTP</name>
        <dbReference type="ChEBI" id="CHEBI:37565"/>
    </ligand>
</feature>
<feature type="binding site" evidence="1">
    <location>
        <position position="194"/>
    </location>
    <ligand>
        <name>Mg(2+)</name>
        <dbReference type="ChEBI" id="CHEBI:18420"/>
    </ligand>
</feature>
<feature type="binding site" evidence="1">
    <location>
        <begin position="214"/>
        <end position="217"/>
    </location>
    <ligand>
        <name>GTP</name>
        <dbReference type="ChEBI" id="CHEBI:37565"/>
    </ligand>
</feature>
<feature type="binding site" evidence="1">
    <location>
        <begin position="284"/>
        <end position="287"/>
    </location>
    <ligand>
        <name>GTP</name>
        <dbReference type="ChEBI" id="CHEBI:37565"/>
    </ligand>
</feature>
<feature type="binding site" evidence="1">
    <location>
        <begin position="319"/>
        <end position="321"/>
    </location>
    <ligand>
        <name>GTP</name>
        <dbReference type="ChEBI" id="CHEBI:37565"/>
    </ligand>
</feature>
<reference key="1">
    <citation type="journal article" date="2006" name="Proc. Natl. Acad. Sci. U.S.A.">
        <title>Comparative genomics of the lactic acid bacteria.</title>
        <authorList>
            <person name="Makarova K.S."/>
            <person name="Slesarev A."/>
            <person name="Wolf Y.I."/>
            <person name="Sorokin A."/>
            <person name="Mirkin B."/>
            <person name="Koonin E.V."/>
            <person name="Pavlov A."/>
            <person name="Pavlova N."/>
            <person name="Karamychev V."/>
            <person name="Polouchine N."/>
            <person name="Shakhova V."/>
            <person name="Grigoriev I."/>
            <person name="Lou Y."/>
            <person name="Rohksar D."/>
            <person name="Lucas S."/>
            <person name="Huang K."/>
            <person name="Goodstein D.M."/>
            <person name="Hawkins T."/>
            <person name="Plengvidhya V."/>
            <person name="Welker D."/>
            <person name="Hughes J."/>
            <person name="Goh Y."/>
            <person name="Benson A."/>
            <person name="Baldwin K."/>
            <person name="Lee J.-H."/>
            <person name="Diaz-Muniz I."/>
            <person name="Dosti B."/>
            <person name="Smeianov V."/>
            <person name="Wechter W."/>
            <person name="Barabote R."/>
            <person name="Lorca G."/>
            <person name="Altermann E."/>
            <person name="Barrangou R."/>
            <person name="Ganesan B."/>
            <person name="Xie Y."/>
            <person name="Rawsthorne H."/>
            <person name="Tamir D."/>
            <person name="Parker C."/>
            <person name="Breidt F."/>
            <person name="Broadbent J.R."/>
            <person name="Hutkins R."/>
            <person name="O'Sullivan D."/>
            <person name="Steele J."/>
            <person name="Unlu G."/>
            <person name="Saier M.H. Jr."/>
            <person name="Klaenhammer T."/>
            <person name="Richardson P."/>
            <person name="Kozyavkin S."/>
            <person name="Weimer B.C."/>
            <person name="Mills D.A."/>
        </authorList>
    </citation>
    <scope>NUCLEOTIDE SEQUENCE [LARGE SCALE GENOMIC DNA]</scope>
    <source>
        <strain>SK11</strain>
    </source>
</reference>
<protein>
    <recommendedName>
        <fullName evidence="1">GTPase Obg</fullName>
        <ecNumber evidence="1">3.6.5.-</ecNumber>
    </recommendedName>
    <alternativeName>
        <fullName evidence="1">GTP-binding protein Obg</fullName>
    </alternativeName>
</protein>
<organism>
    <name type="scientific">Lactococcus lactis subsp. cremoris (strain SK11)</name>
    <dbReference type="NCBI Taxonomy" id="272622"/>
    <lineage>
        <taxon>Bacteria</taxon>
        <taxon>Bacillati</taxon>
        <taxon>Bacillota</taxon>
        <taxon>Bacilli</taxon>
        <taxon>Lactobacillales</taxon>
        <taxon>Streptococcaceae</taxon>
        <taxon>Lactococcus</taxon>
        <taxon>Lactococcus cremoris subsp. cremoris</taxon>
    </lineage>
</organism>
<comment type="function">
    <text evidence="1">An essential GTPase which binds GTP, GDP and possibly (p)ppGpp with moderate affinity, with high nucleotide exchange rates and a fairly low GTP hydrolysis rate. Plays a role in control of the cell cycle, stress response, ribosome biogenesis and in those bacteria that undergo differentiation, in morphogenesis control.</text>
</comment>
<comment type="cofactor">
    <cofactor evidence="1">
        <name>Mg(2+)</name>
        <dbReference type="ChEBI" id="CHEBI:18420"/>
    </cofactor>
</comment>
<comment type="subunit">
    <text evidence="1">Monomer.</text>
</comment>
<comment type="subcellular location">
    <subcellularLocation>
        <location evidence="1">Cytoplasm</location>
    </subcellularLocation>
</comment>
<comment type="similarity">
    <text evidence="1">Belongs to the TRAFAC class OBG-HflX-like GTPase superfamily. OBG GTPase family.</text>
</comment>
<name>OBG_LACLS</name>
<keyword id="KW-0963">Cytoplasm</keyword>
<keyword id="KW-0342">GTP-binding</keyword>
<keyword id="KW-0378">Hydrolase</keyword>
<keyword id="KW-0460">Magnesium</keyword>
<keyword id="KW-0479">Metal-binding</keyword>
<keyword id="KW-0547">Nucleotide-binding</keyword>
<evidence type="ECO:0000255" key="1">
    <source>
        <dbReference type="HAMAP-Rule" id="MF_01454"/>
    </source>
</evidence>
<evidence type="ECO:0000255" key="2">
    <source>
        <dbReference type="PROSITE-ProRule" id="PRU01229"/>
    </source>
</evidence>
<evidence type="ECO:0000255" key="3">
    <source>
        <dbReference type="PROSITE-ProRule" id="PRU01231"/>
    </source>
</evidence>